<gene>
    <name evidence="1" type="primary">psbH</name>
    <name type="ordered locus">Npun_F4315</name>
</gene>
<sequence>MAQRTRLGDILKPLNSEYGKVAPGWGTTPVMAVFMALFFVFLLIILQLYNRSLLVQDVLVDWRSLGR</sequence>
<accession>B2JA13</accession>
<comment type="function">
    <text evidence="1">One of the components of the core complex of photosystem II (PSII), required for its stability and/or assembly. PSII is a light-driven water:plastoquinone oxidoreductase that uses light energy to abstract electrons from H(2)O, generating O(2) and a proton gradient subsequently used for ATP formation. It consists of a core antenna complex that captures photons, and an electron transfer chain that converts photonic excitation into a charge separation.</text>
</comment>
<comment type="subunit">
    <text evidence="1">PSII is composed of 1 copy each of membrane proteins PsbA, PsbB, PsbC, PsbD, PsbE, PsbF, PsbH, PsbI, PsbJ, PsbK, PsbL, PsbM, PsbT, PsbX, PsbY, PsbZ, Psb30/Ycf12, peripheral proteins PsbO, CyanoQ (PsbQ), PsbU, PsbV and a large number of cofactors. It forms dimeric complexes.</text>
</comment>
<comment type="subcellular location">
    <subcellularLocation>
        <location evidence="1">Cellular thylakoid membrane</location>
        <topology evidence="1">Single-pass membrane protein</topology>
    </subcellularLocation>
</comment>
<comment type="similarity">
    <text evidence="1">Belongs to the PsbH family.</text>
</comment>
<dbReference type="EMBL" id="CP001037">
    <property type="protein sequence ID" value="ACC82690.1"/>
    <property type="molecule type" value="Genomic_DNA"/>
</dbReference>
<dbReference type="RefSeq" id="WP_012410655.1">
    <property type="nucleotide sequence ID" value="NC_010628.1"/>
</dbReference>
<dbReference type="SMR" id="B2JA13"/>
<dbReference type="STRING" id="63737.Npun_F4315"/>
<dbReference type="EnsemblBacteria" id="ACC82690">
    <property type="protein sequence ID" value="ACC82690"/>
    <property type="gene ID" value="Npun_F4315"/>
</dbReference>
<dbReference type="KEGG" id="npu:Npun_F4315"/>
<dbReference type="eggNOG" id="ENOG50332MV">
    <property type="taxonomic scope" value="Bacteria"/>
</dbReference>
<dbReference type="HOGENOM" id="CLU_190203_0_0_3"/>
<dbReference type="OrthoDB" id="427121at2"/>
<dbReference type="PhylomeDB" id="B2JA13"/>
<dbReference type="Proteomes" id="UP000001191">
    <property type="component" value="Chromosome"/>
</dbReference>
<dbReference type="GO" id="GO:0009523">
    <property type="term" value="C:photosystem II"/>
    <property type="evidence" value="ECO:0007669"/>
    <property type="project" value="UniProtKB-KW"/>
</dbReference>
<dbReference type="GO" id="GO:0031676">
    <property type="term" value="C:plasma membrane-derived thylakoid membrane"/>
    <property type="evidence" value="ECO:0007669"/>
    <property type="project" value="UniProtKB-SubCell"/>
</dbReference>
<dbReference type="GO" id="GO:0042301">
    <property type="term" value="F:phosphate ion binding"/>
    <property type="evidence" value="ECO:0007669"/>
    <property type="project" value="InterPro"/>
</dbReference>
<dbReference type="GO" id="GO:0015979">
    <property type="term" value="P:photosynthesis"/>
    <property type="evidence" value="ECO:0007669"/>
    <property type="project" value="UniProtKB-UniRule"/>
</dbReference>
<dbReference type="GO" id="GO:0050821">
    <property type="term" value="P:protein stabilization"/>
    <property type="evidence" value="ECO:0007669"/>
    <property type="project" value="InterPro"/>
</dbReference>
<dbReference type="Gene3D" id="1.20.5.880">
    <property type="entry name" value="Photosystem II reaction center protein H"/>
    <property type="match status" value="1"/>
</dbReference>
<dbReference type="HAMAP" id="MF_00752">
    <property type="entry name" value="PSII_PsbH"/>
    <property type="match status" value="1"/>
</dbReference>
<dbReference type="InterPro" id="IPR001056">
    <property type="entry name" value="PSII_PsbH"/>
</dbReference>
<dbReference type="InterPro" id="IPR036863">
    <property type="entry name" value="PSII_PsbH_sf"/>
</dbReference>
<dbReference type="NCBIfam" id="NF002728">
    <property type="entry name" value="PRK02624.1"/>
    <property type="match status" value="1"/>
</dbReference>
<dbReference type="PANTHER" id="PTHR34469">
    <property type="entry name" value="PHOTOSYSTEM II REACTION CENTER PROTEIN H"/>
    <property type="match status" value="1"/>
</dbReference>
<dbReference type="PANTHER" id="PTHR34469:SF4">
    <property type="entry name" value="PHOTOSYSTEM II REACTION CENTER PROTEIN H"/>
    <property type="match status" value="1"/>
</dbReference>
<dbReference type="Pfam" id="PF00737">
    <property type="entry name" value="PsbH"/>
    <property type="match status" value="1"/>
</dbReference>
<dbReference type="SUPFAM" id="SSF161025">
    <property type="entry name" value="Photosystem II 10 kDa phosphoprotein PsbH"/>
    <property type="match status" value="1"/>
</dbReference>
<protein>
    <recommendedName>
        <fullName evidence="1">Photosystem II reaction center protein H</fullName>
        <shortName evidence="1">PSII-H</shortName>
    </recommendedName>
</protein>
<organism>
    <name type="scientific">Nostoc punctiforme (strain ATCC 29133 / PCC 73102)</name>
    <dbReference type="NCBI Taxonomy" id="63737"/>
    <lineage>
        <taxon>Bacteria</taxon>
        <taxon>Bacillati</taxon>
        <taxon>Cyanobacteriota</taxon>
        <taxon>Cyanophyceae</taxon>
        <taxon>Nostocales</taxon>
        <taxon>Nostocaceae</taxon>
        <taxon>Nostoc</taxon>
    </lineage>
</organism>
<feature type="chain" id="PRO_1000192872" description="Photosystem II reaction center protein H">
    <location>
        <begin position="1"/>
        <end position="67"/>
    </location>
</feature>
<feature type="transmembrane region" description="Helical" evidence="1">
    <location>
        <begin position="29"/>
        <end position="49"/>
    </location>
</feature>
<name>PSBH_NOSP7</name>
<reference key="1">
    <citation type="journal article" date="2013" name="Plant Physiol.">
        <title>A Nostoc punctiforme Sugar Transporter Necessary to Establish a Cyanobacterium-Plant Symbiosis.</title>
        <authorList>
            <person name="Ekman M."/>
            <person name="Picossi S."/>
            <person name="Campbell E.L."/>
            <person name="Meeks J.C."/>
            <person name="Flores E."/>
        </authorList>
    </citation>
    <scope>NUCLEOTIDE SEQUENCE [LARGE SCALE GENOMIC DNA]</scope>
    <source>
        <strain>ATCC 29133 / PCC 73102</strain>
    </source>
</reference>
<evidence type="ECO:0000255" key="1">
    <source>
        <dbReference type="HAMAP-Rule" id="MF_00752"/>
    </source>
</evidence>
<keyword id="KW-0472">Membrane</keyword>
<keyword id="KW-0602">Photosynthesis</keyword>
<keyword id="KW-0604">Photosystem II</keyword>
<keyword id="KW-1185">Reference proteome</keyword>
<keyword id="KW-0793">Thylakoid</keyword>
<keyword id="KW-0812">Transmembrane</keyword>
<keyword id="KW-1133">Transmembrane helix</keyword>
<proteinExistence type="inferred from homology"/>